<name>UVSE_BACC4</name>
<reference key="1">
    <citation type="submission" date="2008-10" db="EMBL/GenBank/DDBJ databases">
        <title>Genome sequence of Bacillus cereus B4264.</title>
        <authorList>
            <person name="Dodson R.J."/>
            <person name="Durkin A.S."/>
            <person name="Rosovitz M.J."/>
            <person name="Rasko D.A."/>
            <person name="Hoffmaster A."/>
            <person name="Ravel J."/>
            <person name="Sutton G."/>
        </authorList>
    </citation>
    <scope>NUCLEOTIDE SEQUENCE [LARGE SCALE GENOMIC DNA]</scope>
    <source>
        <strain>B4264</strain>
    </source>
</reference>
<dbReference type="EC" id="3.-.-.-" evidence="2"/>
<dbReference type="EMBL" id="CP001176">
    <property type="protein sequence ID" value="ACK63575.1"/>
    <property type="molecule type" value="Genomic_DNA"/>
</dbReference>
<dbReference type="RefSeq" id="WP_011110499.1">
    <property type="nucleotide sequence ID" value="NZ_VEHB01000004.1"/>
</dbReference>
<dbReference type="SMR" id="B7HFP5"/>
<dbReference type="KEGG" id="bcb:BCB4264_A5470"/>
<dbReference type="HOGENOM" id="CLU_017168_0_1_9"/>
<dbReference type="Proteomes" id="UP000007096">
    <property type="component" value="Chromosome"/>
</dbReference>
<dbReference type="GO" id="GO:0004519">
    <property type="term" value="F:endonuclease activity"/>
    <property type="evidence" value="ECO:0007669"/>
    <property type="project" value="UniProtKB-UniRule"/>
</dbReference>
<dbReference type="GO" id="GO:0006289">
    <property type="term" value="P:nucleotide-excision repair"/>
    <property type="evidence" value="ECO:0007669"/>
    <property type="project" value="InterPro"/>
</dbReference>
<dbReference type="GO" id="GO:0006290">
    <property type="term" value="P:pyrimidine dimer repair"/>
    <property type="evidence" value="ECO:0007669"/>
    <property type="project" value="UniProtKB-UniRule"/>
</dbReference>
<dbReference type="GO" id="GO:0009411">
    <property type="term" value="P:response to UV"/>
    <property type="evidence" value="ECO:0007669"/>
    <property type="project" value="InterPro"/>
</dbReference>
<dbReference type="Gene3D" id="3.20.20.150">
    <property type="entry name" value="Divalent-metal-dependent TIM barrel enzymes"/>
    <property type="match status" value="1"/>
</dbReference>
<dbReference type="HAMAP" id="MF_00606">
    <property type="entry name" value="UV_endonuclease"/>
    <property type="match status" value="1"/>
</dbReference>
<dbReference type="InterPro" id="IPR004601">
    <property type="entry name" value="UvdE"/>
</dbReference>
<dbReference type="InterPro" id="IPR023520">
    <property type="entry name" value="UvdE_bac"/>
</dbReference>
<dbReference type="InterPro" id="IPR036237">
    <property type="entry name" value="Xyl_isomerase-like_sf"/>
</dbReference>
<dbReference type="NCBIfam" id="TIGR00629">
    <property type="entry name" value="uvde"/>
    <property type="match status" value="1"/>
</dbReference>
<dbReference type="PANTHER" id="PTHR31290">
    <property type="entry name" value="UV-DAMAGE ENDONUCLEASE"/>
    <property type="match status" value="1"/>
</dbReference>
<dbReference type="PANTHER" id="PTHR31290:SF5">
    <property type="entry name" value="UV-DAMAGE ENDONUCLEASE"/>
    <property type="match status" value="1"/>
</dbReference>
<dbReference type="Pfam" id="PF03851">
    <property type="entry name" value="UvdE"/>
    <property type="match status" value="1"/>
</dbReference>
<dbReference type="SUPFAM" id="SSF51658">
    <property type="entry name" value="Xylose isomerase-like"/>
    <property type="match status" value="1"/>
</dbReference>
<keyword id="KW-0227">DNA damage</keyword>
<keyword id="KW-0228">DNA excision</keyword>
<keyword id="KW-0234">DNA repair</keyword>
<keyword id="KW-0255">Endonuclease</keyword>
<keyword id="KW-0378">Hydrolase</keyword>
<keyword id="KW-0540">Nuclease</keyword>
<evidence type="ECO:0000250" key="1"/>
<evidence type="ECO:0000255" key="2">
    <source>
        <dbReference type="HAMAP-Rule" id="MF_00606"/>
    </source>
</evidence>
<protein>
    <recommendedName>
        <fullName evidence="2">UV DNA damage endonuclease</fullName>
        <shortName evidence="2">UV-endonuclease</shortName>
        <shortName evidence="2">UVED</shortName>
        <ecNumber evidence="2">3.-.-.-</ecNumber>
    </recommendedName>
</protein>
<comment type="function">
    <text evidence="1">Component in a DNA repair pathway. Removal of UV LIGHT damaged nucleotides. Recognizes pyrimidine dimers and cleave a phosphodiester bond immediately 5' to the lesion (By similarity).</text>
</comment>
<comment type="similarity">
    <text evidence="2">Belongs to the uve1/UvsE family.</text>
</comment>
<proteinExistence type="inferred from homology"/>
<feature type="chain" id="PRO_1000130231" description="UV DNA damage endonuclease">
    <location>
        <begin position="1"/>
        <end position="317"/>
    </location>
</feature>
<sequence>MLIRFGYVSHAMALWDCSPAKTMTFTSFKKLSKQEREDKLYHVIRQNLEHTIRILHYNIAHEIPLYRLSSSIVPLATHPEVEFDYIGVFTPLWRKIGALIKEHNLRISFHPNQFTLFTSDKPHITTNAITDMTYHYKILDAIGIADSSYINIHVGGAYGNKEKAIERFHENIKKLPTHIKKQMTLENDDKTYTTAETLSICQKENIPFVFDYHHHMANLCEEPLEELLPAIFETWSHTNISPKVHISSPRSEKEFRAHAEYIDLEFIKPFLHIAKKHNHNFDIMIESKQKDLALFQLIDELSAIRGIKRISGAMLQW</sequence>
<gene>
    <name evidence="2" type="primary">uvsE</name>
    <name type="ordered locus">BCB4264_A5470</name>
</gene>
<accession>B7HFP5</accession>
<organism>
    <name type="scientific">Bacillus cereus (strain B4264)</name>
    <dbReference type="NCBI Taxonomy" id="405532"/>
    <lineage>
        <taxon>Bacteria</taxon>
        <taxon>Bacillati</taxon>
        <taxon>Bacillota</taxon>
        <taxon>Bacilli</taxon>
        <taxon>Bacillales</taxon>
        <taxon>Bacillaceae</taxon>
        <taxon>Bacillus</taxon>
        <taxon>Bacillus cereus group</taxon>
    </lineage>
</organism>